<gene>
    <name evidence="1" type="primary">dtd</name>
    <name type="ordered locus">THA_1655</name>
</gene>
<keyword id="KW-0963">Cytoplasm</keyword>
<keyword id="KW-0378">Hydrolase</keyword>
<keyword id="KW-1185">Reference proteome</keyword>
<keyword id="KW-0694">RNA-binding</keyword>
<keyword id="KW-0820">tRNA-binding</keyword>
<reference key="1">
    <citation type="journal article" date="2009" name="J. Bacteriol.">
        <title>The genome of Thermosipho africanus TCF52B: lateral genetic connections to the Firmicutes and Archaea.</title>
        <authorList>
            <person name="Nesboe C.L."/>
            <person name="Bapteste E."/>
            <person name="Curtis B."/>
            <person name="Dahle H."/>
            <person name="Lopez P."/>
            <person name="Macleod D."/>
            <person name="Dlutek M."/>
            <person name="Bowman S."/>
            <person name="Zhaxybayeva O."/>
            <person name="Birkeland N.-K."/>
            <person name="Doolittle W.F."/>
        </authorList>
    </citation>
    <scope>NUCLEOTIDE SEQUENCE [LARGE SCALE GENOMIC DNA]</scope>
    <source>
        <strain>TCF52B</strain>
    </source>
</reference>
<protein>
    <recommendedName>
        <fullName evidence="1">D-aminoacyl-tRNA deacylase</fullName>
        <shortName evidence="1">DTD</shortName>
        <ecNumber evidence="1">3.1.1.96</ecNumber>
    </recommendedName>
    <alternativeName>
        <fullName evidence="1">Gly-tRNA(Ala) deacylase</fullName>
    </alternativeName>
</protein>
<dbReference type="EC" id="3.1.1.96" evidence="1"/>
<dbReference type="EMBL" id="CP001185">
    <property type="protein sequence ID" value="ACJ76093.1"/>
    <property type="molecule type" value="Genomic_DNA"/>
</dbReference>
<dbReference type="RefSeq" id="WP_004102462.1">
    <property type="nucleotide sequence ID" value="NC_011653.1"/>
</dbReference>
<dbReference type="SMR" id="B7IDL6"/>
<dbReference type="STRING" id="484019.THA_1655"/>
<dbReference type="KEGG" id="taf:THA_1655"/>
<dbReference type="eggNOG" id="COG1490">
    <property type="taxonomic scope" value="Bacteria"/>
</dbReference>
<dbReference type="HOGENOM" id="CLU_076901_1_0_0"/>
<dbReference type="OrthoDB" id="9801395at2"/>
<dbReference type="Proteomes" id="UP000002453">
    <property type="component" value="Chromosome"/>
</dbReference>
<dbReference type="GO" id="GO:0005737">
    <property type="term" value="C:cytoplasm"/>
    <property type="evidence" value="ECO:0007669"/>
    <property type="project" value="UniProtKB-SubCell"/>
</dbReference>
<dbReference type="GO" id="GO:0051500">
    <property type="term" value="F:D-tyrosyl-tRNA(Tyr) deacylase activity"/>
    <property type="evidence" value="ECO:0007669"/>
    <property type="project" value="TreeGrafter"/>
</dbReference>
<dbReference type="GO" id="GO:0106026">
    <property type="term" value="F:Gly-tRNA(Ala) deacylase activity"/>
    <property type="evidence" value="ECO:0007669"/>
    <property type="project" value="UniProtKB-UniRule"/>
</dbReference>
<dbReference type="GO" id="GO:0043908">
    <property type="term" value="F:Ser(Gly)-tRNA(Ala) hydrolase activity"/>
    <property type="evidence" value="ECO:0007669"/>
    <property type="project" value="UniProtKB-UniRule"/>
</dbReference>
<dbReference type="GO" id="GO:0000049">
    <property type="term" value="F:tRNA binding"/>
    <property type="evidence" value="ECO:0007669"/>
    <property type="project" value="UniProtKB-UniRule"/>
</dbReference>
<dbReference type="GO" id="GO:0019478">
    <property type="term" value="P:D-amino acid catabolic process"/>
    <property type="evidence" value="ECO:0007669"/>
    <property type="project" value="UniProtKB-UniRule"/>
</dbReference>
<dbReference type="CDD" id="cd00563">
    <property type="entry name" value="Dtyr_deacylase"/>
    <property type="match status" value="1"/>
</dbReference>
<dbReference type="FunFam" id="3.50.80.10:FF:000001">
    <property type="entry name" value="D-aminoacyl-tRNA deacylase"/>
    <property type="match status" value="1"/>
</dbReference>
<dbReference type="Gene3D" id="3.50.80.10">
    <property type="entry name" value="D-tyrosyl-tRNA(Tyr) deacylase"/>
    <property type="match status" value="1"/>
</dbReference>
<dbReference type="HAMAP" id="MF_00518">
    <property type="entry name" value="Deacylase_Dtd"/>
    <property type="match status" value="1"/>
</dbReference>
<dbReference type="InterPro" id="IPR003732">
    <property type="entry name" value="Daa-tRNA_deacyls_DTD"/>
</dbReference>
<dbReference type="InterPro" id="IPR023509">
    <property type="entry name" value="DTD-like_sf"/>
</dbReference>
<dbReference type="NCBIfam" id="TIGR00256">
    <property type="entry name" value="D-aminoacyl-tRNA deacylase"/>
    <property type="match status" value="1"/>
</dbReference>
<dbReference type="PANTHER" id="PTHR10472:SF5">
    <property type="entry name" value="D-AMINOACYL-TRNA DEACYLASE 1"/>
    <property type="match status" value="1"/>
</dbReference>
<dbReference type="PANTHER" id="PTHR10472">
    <property type="entry name" value="D-TYROSYL-TRNA TYR DEACYLASE"/>
    <property type="match status" value="1"/>
</dbReference>
<dbReference type="Pfam" id="PF02580">
    <property type="entry name" value="Tyr_Deacylase"/>
    <property type="match status" value="1"/>
</dbReference>
<dbReference type="SUPFAM" id="SSF69500">
    <property type="entry name" value="DTD-like"/>
    <property type="match status" value="1"/>
</dbReference>
<sequence length="149" mass="16662">MRAVIQRVKNAKVEVEGKTVGKIENGLLVLLGVGKDDNKEDIKYLAEKIINLRIFDDENGKMNLSLLDINGELLIVSQFTLYGDCRKGRRPSYSESAPPDIAKKLYEEFVNACKNYNLKVETGEFGAHMQVSLVNDGPVTLLLDSKKVF</sequence>
<organism>
    <name type="scientific">Thermosipho africanus (strain TCF52B)</name>
    <dbReference type="NCBI Taxonomy" id="484019"/>
    <lineage>
        <taxon>Bacteria</taxon>
        <taxon>Thermotogati</taxon>
        <taxon>Thermotogota</taxon>
        <taxon>Thermotogae</taxon>
        <taxon>Thermotogales</taxon>
        <taxon>Fervidobacteriaceae</taxon>
        <taxon>Thermosipho</taxon>
    </lineage>
</organism>
<proteinExistence type="inferred from homology"/>
<accession>B7IDL6</accession>
<comment type="function">
    <text evidence="1">An aminoacyl-tRNA editing enzyme that deacylates mischarged D-aminoacyl-tRNAs. Also deacylates mischarged glycyl-tRNA(Ala), protecting cells against glycine mischarging by AlaRS. Acts via tRNA-based rather than protein-based catalysis; rejects L-amino acids rather than detecting D-amino acids in the active site. By recycling D-aminoacyl-tRNA to D-amino acids and free tRNA molecules, this enzyme counteracts the toxicity associated with the formation of D-aminoacyl-tRNA entities in vivo and helps enforce protein L-homochirality.</text>
</comment>
<comment type="catalytic activity">
    <reaction evidence="1">
        <text>glycyl-tRNA(Ala) + H2O = tRNA(Ala) + glycine + H(+)</text>
        <dbReference type="Rhea" id="RHEA:53744"/>
        <dbReference type="Rhea" id="RHEA-COMP:9657"/>
        <dbReference type="Rhea" id="RHEA-COMP:13640"/>
        <dbReference type="ChEBI" id="CHEBI:15377"/>
        <dbReference type="ChEBI" id="CHEBI:15378"/>
        <dbReference type="ChEBI" id="CHEBI:57305"/>
        <dbReference type="ChEBI" id="CHEBI:78442"/>
        <dbReference type="ChEBI" id="CHEBI:78522"/>
        <dbReference type="EC" id="3.1.1.96"/>
    </reaction>
</comment>
<comment type="catalytic activity">
    <reaction evidence="1">
        <text>a D-aminoacyl-tRNA + H2O = a tRNA + a D-alpha-amino acid + H(+)</text>
        <dbReference type="Rhea" id="RHEA:13953"/>
        <dbReference type="Rhea" id="RHEA-COMP:10123"/>
        <dbReference type="Rhea" id="RHEA-COMP:10124"/>
        <dbReference type="ChEBI" id="CHEBI:15377"/>
        <dbReference type="ChEBI" id="CHEBI:15378"/>
        <dbReference type="ChEBI" id="CHEBI:59871"/>
        <dbReference type="ChEBI" id="CHEBI:78442"/>
        <dbReference type="ChEBI" id="CHEBI:79333"/>
        <dbReference type="EC" id="3.1.1.96"/>
    </reaction>
</comment>
<comment type="subunit">
    <text evidence="1">Homodimer.</text>
</comment>
<comment type="subcellular location">
    <subcellularLocation>
        <location evidence="1">Cytoplasm</location>
    </subcellularLocation>
</comment>
<comment type="domain">
    <text evidence="1">A Gly-cisPro motif from one monomer fits into the active site of the other monomer to allow specific chiral rejection of L-amino acids.</text>
</comment>
<comment type="similarity">
    <text evidence="1">Belongs to the DTD family.</text>
</comment>
<evidence type="ECO:0000255" key="1">
    <source>
        <dbReference type="HAMAP-Rule" id="MF_00518"/>
    </source>
</evidence>
<name>DTD_THEAB</name>
<feature type="chain" id="PRO_1000127586" description="D-aminoacyl-tRNA deacylase">
    <location>
        <begin position="1"/>
        <end position="149"/>
    </location>
</feature>
<feature type="short sequence motif" description="Gly-cisPro motif, important for rejection of L-amino acids" evidence="1">
    <location>
        <begin position="137"/>
        <end position="138"/>
    </location>
</feature>